<organism>
    <name type="scientific">Bacillus anthracis (strain A0248)</name>
    <dbReference type="NCBI Taxonomy" id="592021"/>
    <lineage>
        <taxon>Bacteria</taxon>
        <taxon>Bacillati</taxon>
        <taxon>Bacillota</taxon>
        <taxon>Bacilli</taxon>
        <taxon>Bacillales</taxon>
        <taxon>Bacillaceae</taxon>
        <taxon>Bacillus</taxon>
        <taxon>Bacillus cereus group</taxon>
    </lineage>
</organism>
<feature type="chain" id="PRO_1000148664" description="NADPH-dependent 7-cyano-7-deazaguanine reductase">
    <location>
        <begin position="1"/>
        <end position="165"/>
    </location>
</feature>
<feature type="active site" description="Thioimide intermediate" evidence="1">
    <location>
        <position position="56"/>
    </location>
</feature>
<feature type="active site" description="Proton donor" evidence="1">
    <location>
        <position position="63"/>
    </location>
</feature>
<feature type="binding site" evidence="1">
    <location>
        <begin position="78"/>
        <end position="80"/>
    </location>
    <ligand>
        <name>substrate</name>
    </ligand>
</feature>
<feature type="binding site" evidence="1">
    <location>
        <begin position="97"/>
        <end position="98"/>
    </location>
    <ligand>
        <name>substrate</name>
    </ligand>
</feature>
<evidence type="ECO:0000255" key="1">
    <source>
        <dbReference type="HAMAP-Rule" id="MF_00818"/>
    </source>
</evidence>
<keyword id="KW-0963">Cytoplasm</keyword>
<keyword id="KW-0521">NADP</keyword>
<keyword id="KW-0560">Oxidoreductase</keyword>
<keyword id="KW-0671">Queuosine biosynthesis</keyword>
<name>QUEF_BACAA</name>
<comment type="function">
    <text evidence="1">Catalyzes the NADPH-dependent reduction of 7-cyano-7-deazaguanine (preQ0) to 7-aminomethyl-7-deazaguanine (preQ1).</text>
</comment>
<comment type="catalytic activity">
    <reaction evidence="1">
        <text>7-aminomethyl-7-carbaguanine + 2 NADP(+) = 7-cyano-7-deazaguanine + 2 NADPH + 3 H(+)</text>
        <dbReference type="Rhea" id="RHEA:13409"/>
        <dbReference type="ChEBI" id="CHEBI:15378"/>
        <dbReference type="ChEBI" id="CHEBI:45075"/>
        <dbReference type="ChEBI" id="CHEBI:57783"/>
        <dbReference type="ChEBI" id="CHEBI:58349"/>
        <dbReference type="ChEBI" id="CHEBI:58703"/>
        <dbReference type="EC" id="1.7.1.13"/>
    </reaction>
</comment>
<comment type="pathway">
    <text evidence="1">tRNA modification; tRNA-queuosine biosynthesis.</text>
</comment>
<comment type="subcellular location">
    <subcellularLocation>
        <location evidence="1">Cytoplasm</location>
    </subcellularLocation>
</comment>
<comment type="similarity">
    <text evidence="1">Belongs to the GTP cyclohydrolase I family. QueF type 1 subfamily.</text>
</comment>
<sequence length="165" mass="19528">MAGRLDEDLKDVTLLGNQNTKYLFEYSPEILEVFDNNHPNRDYFVKFNCPEFTSLCPKTGQPDFATIYISYIPEQRMVESKSLKLYLFSFRNHGDFHEDCMNVIMNDLIKLMDPRYIEVWGKFTPRGGISIDPYCNYGRPGTKYEQMADYRMMNHDLYPETIDNR</sequence>
<reference key="1">
    <citation type="submission" date="2009-04" db="EMBL/GenBank/DDBJ databases">
        <title>Genome sequence of Bacillus anthracis A0248.</title>
        <authorList>
            <person name="Dodson R.J."/>
            <person name="Munk A.C."/>
            <person name="Bruce D."/>
            <person name="Detter C."/>
            <person name="Tapia R."/>
            <person name="Sutton G."/>
            <person name="Sims D."/>
            <person name="Brettin T."/>
        </authorList>
    </citation>
    <scope>NUCLEOTIDE SEQUENCE [LARGE SCALE GENOMIC DNA]</scope>
    <source>
        <strain>A0248</strain>
    </source>
</reference>
<proteinExistence type="inferred from homology"/>
<gene>
    <name evidence="1" type="primary">queF</name>
    <name type="ordered locus">BAA_1430</name>
</gene>
<dbReference type="EC" id="1.7.1.13" evidence="1"/>
<dbReference type="EMBL" id="CP001598">
    <property type="protein sequence ID" value="ACQ48579.1"/>
    <property type="molecule type" value="Genomic_DNA"/>
</dbReference>
<dbReference type="RefSeq" id="WP_000918895.1">
    <property type="nucleotide sequence ID" value="NC_012659.1"/>
</dbReference>
<dbReference type="SMR" id="C3P4F9"/>
<dbReference type="GeneID" id="93009696"/>
<dbReference type="KEGG" id="bai:BAA_1430"/>
<dbReference type="HOGENOM" id="CLU_102489_0_1_9"/>
<dbReference type="UniPathway" id="UPA00392"/>
<dbReference type="GO" id="GO:0005737">
    <property type="term" value="C:cytoplasm"/>
    <property type="evidence" value="ECO:0007669"/>
    <property type="project" value="UniProtKB-SubCell"/>
</dbReference>
<dbReference type="GO" id="GO:0033739">
    <property type="term" value="F:preQ1 synthase activity"/>
    <property type="evidence" value="ECO:0007669"/>
    <property type="project" value="UniProtKB-UniRule"/>
</dbReference>
<dbReference type="GO" id="GO:0008616">
    <property type="term" value="P:queuosine biosynthetic process"/>
    <property type="evidence" value="ECO:0007669"/>
    <property type="project" value="UniProtKB-UniRule"/>
</dbReference>
<dbReference type="GO" id="GO:0006400">
    <property type="term" value="P:tRNA modification"/>
    <property type="evidence" value="ECO:0007669"/>
    <property type="project" value="UniProtKB-UniRule"/>
</dbReference>
<dbReference type="Gene3D" id="3.30.1130.10">
    <property type="match status" value="1"/>
</dbReference>
<dbReference type="HAMAP" id="MF_00818">
    <property type="entry name" value="QueF_type1"/>
    <property type="match status" value="1"/>
</dbReference>
<dbReference type="InterPro" id="IPR043133">
    <property type="entry name" value="GTP-CH-I_C/QueF"/>
</dbReference>
<dbReference type="InterPro" id="IPR050084">
    <property type="entry name" value="NADPH_dep_7-cyano-7-deazaG_red"/>
</dbReference>
<dbReference type="InterPro" id="IPR029500">
    <property type="entry name" value="QueF"/>
</dbReference>
<dbReference type="InterPro" id="IPR016856">
    <property type="entry name" value="QueF_type1"/>
</dbReference>
<dbReference type="NCBIfam" id="TIGR03139">
    <property type="entry name" value="QueF-II"/>
    <property type="match status" value="1"/>
</dbReference>
<dbReference type="PANTHER" id="PTHR34354">
    <property type="entry name" value="NADPH-DEPENDENT 7-CYANO-7-DEAZAGUANINE REDUCTASE"/>
    <property type="match status" value="1"/>
</dbReference>
<dbReference type="PANTHER" id="PTHR34354:SF1">
    <property type="entry name" value="NADPH-DEPENDENT 7-CYANO-7-DEAZAGUANINE REDUCTASE"/>
    <property type="match status" value="1"/>
</dbReference>
<dbReference type="Pfam" id="PF14489">
    <property type="entry name" value="QueF"/>
    <property type="match status" value="1"/>
</dbReference>
<dbReference type="PIRSF" id="PIRSF027377">
    <property type="entry name" value="Nitrile_oxidored_QueF"/>
    <property type="match status" value="1"/>
</dbReference>
<dbReference type="SUPFAM" id="SSF55620">
    <property type="entry name" value="Tetrahydrobiopterin biosynthesis enzymes-like"/>
    <property type="match status" value="1"/>
</dbReference>
<accession>C3P4F9</accession>
<protein>
    <recommendedName>
        <fullName evidence="1">NADPH-dependent 7-cyano-7-deazaguanine reductase</fullName>
        <ecNumber evidence="1">1.7.1.13</ecNumber>
    </recommendedName>
    <alternativeName>
        <fullName evidence="1">7-cyano-7-carbaguanine reductase</fullName>
    </alternativeName>
    <alternativeName>
        <fullName evidence="1">NADPH-dependent nitrile oxidoreductase</fullName>
    </alternativeName>
    <alternativeName>
        <fullName evidence="1">PreQ(0) reductase</fullName>
    </alternativeName>
</protein>